<reference key="1">
    <citation type="submission" date="2009-01" db="EMBL/GenBank/DDBJ databases">
        <title>Complete sequence of Anaeromyxobacter dehalogenans 2CP-1.</title>
        <authorList>
            <person name="Lucas S."/>
            <person name="Copeland A."/>
            <person name="Lapidus A."/>
            <person name="Glavina del Rio T."/>
            <person name="Dalin E."/>
            <person name="Tice H."/>
            <person name="Bruce D."/>
            <person name="Goodwin L."/>
            <person name="Pitluck S."/>
            <person name="Saunders E."/>
            <person name="Brettin T."/>
            <person name="Detter J.C."/>
            <person name="Han C."/>
            <person name="Larimer F."/>
            <person name="Land M."/>
            <person name="Hauser L."/>
            <person name="Kyrpides N."/>
            <person name="Ovchinnikova G."/>
            <person name="Beliaev A.S."/>
            <person name="Richardson P."/>
        </authorList>
    </citation>
    <scope>NUCLEOTIDE SEQUENCE [LARGE SCALE GENOMIC DNA]</scope>
    <source>
        <strain>2CP-1 / ATCC BAA-258</strain>
    </source>
</reference>
<dbReference type="EMBL" id="CP001359">
    <property type="protein sequence ID" value="ACL67651.1"/>
    <property type="molecule type" value="Genomic_DNA"/>
</dbReference>
<dbReference type="RefSeq" id="WP_011423227.1">
    <property type="nucleotide sequence ID" value="NC_011891.1"/>
</dbReference>
<dbReference type="SMR" id="B8JBP3"/>
<dbReference type="KEGG" id="acp:A2cp1_4334"/>
<dbReference type="HOGENOM" id="CLU_095424_4_0_7"/>
<dbReference type="Proteomes" id="UP000007089">
    <property type="component" value="Chromosome"/>
</dbReference>
<dbReference type="GO" id="GO:0022625">
    <property type="term" value="C:cytosolic large ribosomal subunit"/>
    <property type="evidence" value="ECO:0007669"/>
    <property type="project" value="TreeGrafter"/>
</dbReference>
<dbReference type="GO" id="GO:0003735">
    <property type="term" value="F:structural constituent of ribosome"/>
    <property type="evidence" value="ECO:0007669"/>
    <property type="project" value="InterPro"/>
</dbReference>
<dbReference type="GO" id="GO:0006412">
    <property type="term" value="P:translation"/>
    <property type="evidence" value="ECO:0007669"/>
    <property type="project" value="UniProtKB-UniRule"/>
</dbReference>
<dbReference type="FunFam" id="2.40.50.100:FF:000060">
    <property type="entry name" value="Apicoplast ribosomal protein L27"/>
    <property type="match status" value="1"/>
</dbReference>
<dbReference type="Gene3D" id="2.40.50.100">
    <property type="match status" value="1"/>
</dbReference>
<dbReference type="HAMAP" id="MF_00539">
    <property type="entry name" value="Ribosomal_bL27"/>
    <property type="match status" value="1"/>
</dbReference>
<dbReference type="InterPro" id="IPR001684">
    <property type="entry name" value="Ribosomal_bL27"/>
</dbReference>
<dbReference type="NCBIfam" id="TIGR00062">
    <property type="entry name" value="L27"/>
    <property type="match status" value="1"/>
</dbReference>
<dbReference type="PANTHER" id="PTHR15893:SF0">
    <property type="entry name" value="LARGE RIBOSOMAL SUBUNIT PROTEIN BL27M"/>
    <property type="match status" value="1"/>
</dbReference>
<dbReference type="PANTHER" id="PTHR15893">
    <property type="entry name" value="RIBOSOMAL PROTEIN L27"/>
    <property type="match status" value="1"/>
</dbReference>
<dbReference type="Pfam" id="PF01016">
    <property type="entry name" value="Ribosomal_L27"/>
    <property type="match status" value="1"/>
</dbReference>
<dbReference type="PRINTS" id="PR00063">
    <property type="entry name" value="RIBOSOMALL27"/>
</dbReference>
<dbReference type="SUPFAM" id="SSF110324">
    <property type="entry name" value="Ribosomal L27 protein-like"/>
    <property type="match status" value="1"/>
</dbReference>
<gene>
    <name evidence="1" type="primary">rpmA</name>
    <name type="ordered locus">A2cp1_4334</name>
</gene>
<feature type="chain" id="PRO_1000195871" description="Large ribosomal subunit protein bL27">
    <location>
        <begin position="1"/>
        <end position="85"/>
    </location>
</feature>
<feature type="region of interest" description="Disordered" evidence="2">
    <location>
        <begin position="1"/>
        <end position="22"/>
    </location>
</feature>
<evidence type="ECO:0000255" key="1">
    <source>
        <dbReference type="HAMAP-Rule" id="MF_00539"/>
    </source>
</evidence>
<evidence type="ECO:0000256" key="2">
    <source>
        <dbReference type="SAM" id="MobiDB-lite"/>
    </source>
</evidence>
<evidence type="ECO:0000305" key="3"/>
<protein>
    <recommendedName>
        <fullName evidence="1">Large ribosomal subunit protein bL27</fullName>
    </recommendedName>
    <alternativeName>
        <fullName evidence="3">50S ribosomal protein L27</fullName>
    </alternativeName>
</protein>
<organism>
    <name type="scientific">Anaeromyxobacter dehalogenans (strain 2CP-1 / ATCC BAA-258)</name>
    <dbReference type="NCBI Taxonomy" id="455488"/>
    <lineage>
        <taxon>Bacteria</taxon>
        <taxon>Pseudomonadati</taxon>
        <taxon>Myxococcota</taxon>
        <taxon>Myxococcia</taxon>
        <taxon>Myxococcales</taxon>
        <taxon>Cystobacterineae</taxon>
        <taxon>Anaeromyxobacteraceae</taxon>
        <taxon>Anaeromyxobacter</taxon>
    </lineage>
</organism>
<proteinExistence type="inferred from homology"/>
<name>RL27_ANAD2</name>
<sequence>MAHKKGQGSSRNGRDSPGQRRGIKVYGSEKVVAGNILVRQVGTLVHPGQNVGMGKDFTLFALIDGTVKYSRTRGDRRVVSVLPGA</sequence>
<comment type="similarity">
    <text evidence="1">Belongs to the bacterial ribosomal protein bL27 family.</text>
</comment>
<accession>B8JBP3</accession>
<keyword id="KW-0687">Ribonucleoprotein</keyword>
<keyword id="KW-0689">Ribosomal protein</keyword>